<reference key="1">
    <citation type="journal article" date="1989" name="Mol. Microbiol.">
        <title>Characterization of the virA virulence gene of the nopaline plasmid, pTiC58, of Agrobacterium tumefaciens.</title>
        <authorList>
            <person name="Morel P."/>
            <person name="Powell B.S."/>
            <person name="Rogowsky P.M."/>
            <person name="Kado C.I."/>
        </authorList>
    </citation>
    <scope>NUCLEOTIDE SEQUENCE [GENOMIC DNA]</scope>
</reference>
<reference key="2">
    <citation type="journal article" date="1990" name="Plasmid">
        <title>Molecular characterization of the vir regulon of Agrobacterium tumefaciens: complete nucleotide sequence and gene organization of the 28.63-kbp regulon cloned as a single unit.</title>
        <authorList>
            <person name="Rogowsky P.M."/>
            <person name="Powell B.S."/>
            <person name="Shirasu K."/>
            <person name="Lin T.-S."/>
            <person name="Morel P."/>
            <person name="Zyprian E.M."/>
            <person name="Steck T.R."/>
            <person name="Kado C.I."/>
        </authorList>
    </citation>
    <scope>NUCLEOTIDE SEQUENCE [GENOMIC DNA]</scope>
</reference>
<reference key="3">
    <citation type="submission" date="1995-11" db="EMBL/GenBank/DDBJ databases">
        <authorList>
            <person name="Powell G.K."/>
        </authorList>
    </citation>
    <scope>NUCLEOTIDE SEQUENCE [GENOMIC DNA]</scope>
</reference>
<reference key="4">
    <citation type="journal article" date="2001" name="Science">
        <title>The genome of the natural genetic engineer Agrobacterium tumefaciens C58.</title>
        <authorList>
            <person name="Wood D.W."/>
            <person name="Setubal J.C."/>
            <person name="Kaul R."/>
            <person name="Monks D.E."/>
            <person name="Kitajima J.P."/>
            <person name="Okura V.K."/>
            <person name="Zhou Y."/>
            <person name="Chen L."/>
            <person name="Wood G.E."/>
            <person name="Almeida N.F. Jr."/>
            <person name="Woo L."/>
            <person name="Chen Y."/>
            <person name="Paulsen I.T."/>
            <person name="Eisen J.A."/>
            <person name="Karp P.D."/>
            <person name="Bovee D. Sr."/>
            <person name="Chapman P."/>
            <person name="Clendenning J."/>
            <person name="Deatherage G."/>
            <person name="Gillet W."/>
            <person name="Grant C."/>
            <person name="Kutyavin T."/>
            <person name="Levy R."/>
            <person name="Li M.-J."/>
            <person name="McClelland E."/>
            <person name="Palmieri A."/>
            <person name="Raymond C."/>
            <person name="Rouse G."/>
            <person name="Saenphimmachak C."/>
            <person name="Wu Z."/>
            <person name="Romero P."/>
            <person name="Gordon D."/>
            <person name="Zhang S."/>
            <person name="Yoo H."/>
            <person name="Tao Y."/>
            <person name="Biddle P."/>
            <person name="Jung M."/>
            <person name="Krespan W."/>
            <person name="Perry M."/>
            <person name="Gordon-Kamm B."/>
            <person name="Liao L."/>
            <person name="Kim S."/>
            <person name="Hendrick C."/>
            <person name="Zhao Z.-Y."/>
            <person name="Dolan M."/>
            <person name="Chumley F."/>
            <person name="Tingey S.V."/>
            <person name="Tomb J.-F."/>
            <person name="Gordon M.P."/>
            <person name="Olson M.V."/>
            <person name="Nester E.W."/>
        </authorList>
    </citation>
    <scope>NUCLEOTIDE SEQUENCE [LARGE SCALE GENOMIC DNA]</scope>
</reference>
<reference key="5">
    <citation type="journal article" date="2001" name="Science">
        <title>Genome sequence of the plant pathogen and biotechnology agent Agrobacterium tumefaciens C58.</title>
        <authorList>
            <person name="Goodner B."/>
            <person name="Hinkle G."/>
            <person name="Gattung S."/>
            <person name="Miller N."/>
            <person name="Blanchard M."/>
            <person name="Qurollo B."/>
            <person name="Goldman B.S."/>
            <person name="Cao Y."/>
            <person name="Askenazi M."/>
            <person name="Halling C."/>
            <person name="Mullin L."/>
            <person name="Houmiel K."/>
            <person name="Gordon J."/>
            <person name="Vaudin M."/>
            <person name="Iartchouk O."/>
            <person name="Epp A."/>
            <person name="Liu F."/>
            <person name="Wollam C."/>
            <person name="Allinger M."/>
            <person name="Doughty D."/>
            <person name="Scott C."/>
            <person name="Lappas C."/>
            <person name="Markelz B."/>
            <person name="Flanagan C."/>
            <person name="Crowell C."/>
            <person name="Gurson J."/>
            <person name="Lomo C."/>
            <person name="Sear C."/>
            <person name="Strub G."/>
            <person name="Cielo C."/>
            <person name="Slater S."/>
        </authorList>
    </citation>
    <scope>NUCLEOTIDE SEQUENCE [LARGE SCALE GENOMIC DNA]</scope>
    <source>
        <strain>C58 / ATCC 33970</strain>
    </source>
</reference>
<evidence type="ECO:0000255" key="1"/>
<evidence type="ECO:0000255" key="2">
    <source>
        <dbReference type="PROSITE-ProRule" id="PRU00107"/>
    </source>
</evidence>
<evidence type="ECO:0000255" key="3">
    <source>
        <dbReference type="PROSITE-ProRule" id="PRU00169"/>
    </source>
</evidence>
<evidence type="ECO:0000305" key="4"/>
<keyword id="KW-0067">ATP-binding</keyword>
<keyword id="KW-1003">Cell membrane</keyword>
<keyword id="KW-0192">Crown gall tumor</keyword>
<keyword id="KW-0418">Kinase</keyword>
<keyword id="KW-0472">Membrane</keyword>
<keyword id="KW-0547">Nucleotide-binding</keyword>
<keyword id="KW-0597">Phosphoprotein</keyword>
<keyword id="KW-0614">Plasmid</keyword>
<keyword id="KW-1185">Reference proteome</keyword>
<keyword id="KW-0808">Transferase</keyword>
<keyword id="KW-0812">Transmembrane</keyword>
<keyword id="KW-1133">Transmembrane helix</keyword>
<keyword id="KW-0902">Two-component regulatory system</keyword>
<dbReference type="EC" id="2.7.13.3"/>
<dbReference type="EMBL" id="J03320">
    <property type="protein sequence ID" value="AAA91590.1"/>
    <property type="molecule type" value="Genomic_DNA"/>
</dbReference>
<dbReference type="EMBL" id="L48210">
    <property type="protein sequence ID" value="AAA79282.1"/>
    <property type="molecule type" value="Genomic_DNA"/>
</dbReference>
<dbReference type="EMBL" id="AE007871">
    <property type="protein sequence ID" value="AAK90927.1"/>
    <property type="molecule type" value="Genomic_DNA"/>
</dbReference>
<dbReference type="PIR" id="AD3248">
    <property type="entry name" value="AD3248"/>
</dbReference>
<dbReference type="PIR" id="S06972">
    <property type="entry name" value="S06972"/>
</dbReference>
<dbReference type="RefSeq" id="NP_396486.1">
    <property type="nucleotide sequence ID" value="NC_003065.3"/>
</dbReference>
<dbReference type="RefSeq" id="WP_010974914.1">
    <property type="nucleotide sequence ID" value="NC_003065.3"/>
</dbReference>
<dbReference type="SMR" id="P18540"/>
<dbReference type="IntAct" id="P18540">
    <property type="interactions" value="2"/>
</dbReference>
<dbReference type="EnsemblBacteria" id="AAK90927">
    <property type="protein sequence ID" value="AAK90927"/>
    <property type="gene ID" value="Atu6166"/>
</dbReference>
<dbReference type="GeneID" id="1137489"/>
<dbReference type="KEGG" id="atu:Atu6166"/>
<dbReference type="PATRIC" id="fig|176299.10.peg.5363"/>
<dbReference type="HOGENOM" id="CLU_017728_0_0_5"/>
<dbReference type="OrthoDB" id="7533341at2"/>
<dbReference type="BioCyc" id="AGRO:ATU6166-MONOMER"/>
<dbReference type="BRENDA" id="2.7.13.3">
    <property type="organism ID" value="200"/>
</dbReference>
<dbReference type="Proteomes" id="UP000000813">
    <property type="component" value="Plasmid Ti"/>
</dbReference>
<dbReference type="GO" id="GO:0005886">
    <property type="term" value="C:plasma membrane"/>
    <property type="evidence" value="ECO:0007669"/>
    <property type="project" value="UniProtKB-SubCell"/>
</dbReference>
<dbReference type="GO" id="GO:0005524">
    <property type="term" value="F:ATP binding"/>
    <property type="evidence" value="ECO:0007669"/>
    <property type="project" value="UniProtKB-KW"/>
</dbReference>
<dbReference type="GO" id="GO:0000155">
    <property type="term" value="F:phosphorelay sensor kinase activity"/>
    <property type="evidence" value="ECO:0000250"/>
    <property type="project" value="PAMGO_GAT"/>
</dbReference>
<dbReference type="CDD" id="cd00082">
    <property type="entry name" value="HisKA"/>
    <property type="match status" value="1"/>
</dbReference>
<dbReference type="FunFam" id="1.10.287.130:FF:000102">
    <property type="entry name" value="Two-component sensor histidine kinase"/>
    <property type="match status" value="1"/>
</dbReference>
<dbReference type="FunFam" id="3.30.565.10:FF:000134">
    <property type="entry name" value="Two-component sensor histidine kinase"/>
    <property type="match status" value="1"/>
</dbReference>
<dbReference type="Gene3D" id="1.10.287.130">
    <property type="match status" value="1"/>
</dbReference>
<dbReference type="Gene3D" id="3.30.565.10">
    <property type="entry name" value="Histidine kinase-like ATPase, C-terminal domain"/>
    <property type="match status" value="1"/>
</dbReference>
<dbReference type="InterPro" id="IPR045812">
    <property type="entry name" value="DAHL"/>
</dbReference>
<dbReference type="InterPro" id="IPR036890">
    <property type="entry name" value="HATPase_C_sf"/>
</dbReference>
<dbReference type="InterPro" id="IPR005467">
    <property type="entry name" value="His_kinase_dom"/>
</dbReference>
<dbReference type="InterPro" id="IPR003661">
    <property type="entry name" value="HisK_dim/P_dom"/>
</dbReference>
<dbReference type="InterPro" id="IPR036097">
    <property type="entry name" value="HisK_dim/P_sf"/>
</dbReference>
<dbReference type="InterPro" id="IPR004358">
    <property type="entry name" value="Sig_transdc_His_kin-like_C"/>
</dbReference>
<dbReference type="InterPro" id="IPR001789">
    <property type="entry name" value="Sig_transdc_resp-reg_receiver"/>
</dbReference>
<dbReference type="NCBIfam" id="NF010411">
    <property type="entry name" value="PRK13837.1"/>
    <property type="match status" value="1"/>
</dbReference>
<dbReference type="PANTHER" id="PTHR43065">
    <property type="entry name" value="SENSOR HISTIDINE KINASE"/>
    <property type="match status" value="1"/>
</dbReference>
<dbReference type="PANTHER" id="PTHR43065:SF42">
    <property type="entry name" value="TWO-COMPONENT SENSOR PPRA"/>
    <property type="match status" value="1"/>
</dbReference>
<dbReference type="Pfam" id="PF19443">
    <property type="entry name" value="DAHL"/>
    <property type="match status" value="1"/>
</dbReference>
<dbReference type="Pfam" id="PF02518">
    <property type="entry name" value="HATPase_c"/>
    <property type="match status" value="1"/>
</dbReference>
<dbReference type="Pfam" id="PF00512">
    <property type="entry name" value="HisKA"/>
    <property type="match status" value="1"/>
</dbReference>
<dbReference type="PRINTS" id="PR00344">
    <property type="entry name" value="BCTRLSENSOR"/>
</dbReference>
<dbReference type="SMART" id="SM00387">
    <property type="entry name" value="HATPase_c"/>
    <property type="match status" value="1"/>
</dbReference>
<dbReference type="SMART" id="SM00388">
    <property type="entry name" value="HisKA"/>
    <property type="match status" value="1"/>
</dbReference>
<dbReference type="SUPFAM" id="SSF55874">
    <property type="entry name" value="ATPase domain of HSP90 chaperone/DNA topoisomerase II/histidine kinase"/>
    <property type="match status" value="1"/>
</dbReference>
<dbReference type="SUPFAM" id="SSF47384">
    <property type="entry name" value="Homodimeric domain of signal transducing histidine kinase"/>
    <property type="match status" value="1"/>
</dbReference>
<dbReference type="PROSITE" id="PS50109">
    <property type="entry name" value="HIS_KIN"/>
    <property type="match status" value="1"/>
</dbReference>
<dbReference type="PROSITE" id="PS50110">
    <property type="entry name" value="RESPONSE_REGULATORY"/>
    <property type="match status" value="1"/>
</dbReference>
<sequence>MNGRYSPSRQDFKTGAKPWSILALVVAAMIFALMAITSWQDNETNRAILTQLRAINIDSASLQRDVLRAEAGVVANYRPIISRLGALRKNLENLKRLFKQSHLVIGNDFSQLLDKLKVSVDTTDAAVAAFGAQNVLLQDSLASFTRALSILPKMSSTDQTVENSNELGSLMLRFVRQPSPALSLEISHELDMLQKASGGAEVPIRILAREGRVILSILPRVNDAVNMIQTSDTAEIAERLERKCLEAYSLQSVREQRARIFLGSVSVGLCIYIISLVYRLRRKTAWLTRRLDYEEVIKEIGVCFEGGGATASSLNSSAQAALGIIQRFFNAESCALALVDHGDRWAVESFAAKLPEPVWEDLALREMVSLARADERASVFRIMSTRKVSCLPPETPGVSMLLAHKSTDQLIAICSLGYQGYRLKSCPGEVQLLELATACLCHYIDVRRKQTECDILERRLEHAERLQAVGTLAGGIAHEFNNILGAILGYAEMAQNMLRRSSVTRRHIDQIISSGDRARLIIDQILTLSRKLERVTKPFSVSELVMEIAPLLRVALQRNIELKFKFDDKKSVVEGSPLEVQQMLMNLCKNASQAFTADGQIDIIVSRIFVSRQKVLAHGVMPAGDYVLLSVSDDGEGIAETVLPHIFEPFFTTRSCSGGTGLGLAAVHGHVSALAGYIDVTSAVGRGTRFDIYLPPSSKKPVSPDAFFGPCKTPRGNGEIVALIEPDPVLREVYEDKIAALGYEPVGFKTCADLCNWISKGKQADLVLVDQSSLPENQSATALHAAFKTASIIIGGSDLKMSLSSDDMTSALFLPKPISSRTMAYAIRTKIKA</sequence>
<protein>
    <recommendedName>
        <fullName>Wide host range VirA protein</fullName>
        <shortName>WHR VirA</shortName>
        <ecNumber>2.7.13.3</ecNumber>
    </recommendedName>
</protein>
<proteinExistence type="inferred from homology"/>
<comment type="function">
    <text>Activates VirG, by phosphorylating it, in the presence of acetosyringone or hydroxysyringone.</text>
</comment>
<comment type="catalytic activity">
    <reaction>
        <text>ATP + protein L-histidine = ADP + protein N-phospho-L-histidine.</text>
        <dbReference type="EC" id="2.7.13.3"/>
    </reaction>
</comment>
<comment type="subcellular location">
    <subcellularLocation>
        <location evidence="4">Cell membrane</location>
        <topology evidence="4">Multi-pass membrane protein</topology>
    </subcellularLocation>
</comment>
<accession>P18540</accession>
<accession>Q52297</accession>
<geneLocation type="plasmid">
    <name>pTiC58</name>
</geneLocation>
<gene>
    <name type="primary">virA</name>
    <name type="ordered locus">Atu6166</name>
    <name type="ORF">AGR_pTi_2</name>
</gene>
<feature type="chain" id="PRO_0000074895" description="Wide host range VirA protein">
    <location>
        <begin position="1"/>
        <end position="833"/>
    </location>
</feature>
<feature type="transmembrane region" description="Helical" evidence="1">
    <location>
        <begin position="19"/>
        <end position="39"/>
    </location>
</feature>
<feature type="transmembrane region" description="Helical" evidence="1">
    <location>
        <begin position="260"/>
        <end position="280"/>
    </location>
</feature>
<feature type="domain" description="Histidine kinase" evidence="2">
    <location>
        <begin position="475"/>
        <end position="698"/>
    </location>
</feature>
<feature type="domain" description="Response regulatory" evidence="3">
    <location>
        <begin position="720"/>
        <end position="831"/>
    </location>
</feature>
<feature type="modified residue" description="Phosphohistidine; by autocatalysis" evidence="2">
    <location>
        <position position="478"/>
    </location>
</feature>
<feature type="modified residue" description="4-aspartylphosphate" evidence="3">
    <location>
        <position position="770"/>
    </location>
</feature>
<feature type="sequence conflict" description="In Ref. 1 and 2." evidence="4" ref="1 2">
    <original>R</original>
    <variation>S</variation>
    <location>
        <position position="68"/>
    </location>
</feature>
<feature type="sequence conflict" description="In Ref. 1 and 2." evidence="4" ref="1 2">
    <original>L</original>
    <variation>V</variation>
    <location>
        <position position="322"/>
    </location>
</feature>
<feature type="sequence conflict" description="In Ref. 1 and 2." evidence="4" ref="1 2">
    <original>I</original>
    <variation>F</variation>
    <location>
        <position position="455"/>
    </location>
</feature>
<feature type="sequence conflict" description="In Ref. 1." evidence="4" ref="1">
    <original>L</original>
    <variation>P</variation>
    <location>
        <position position="551"/>
    </location>
</feature>
<feature type="sequence conflict" description="In Ref. 1." evidence="4" ref="1">
    <original>SC</original>
    <variation>CS</variation>
    <location>
        <begin position="655"/>
        <end position="656"/>
    </location>
</feature>
<name>VIRA_AGRFC</name>
<organism>
    <name type="scientific">Agrobacterium fabrum (strain C58 / ATCC 33970)</name>
    <name type="common">Agrobacterium tumefaciens (strain C58)</name>
    <dbReference type="NCBI Taxonomy" id="176299"/>
    <lineage>
        <taxon>Bacteria</taxon>
        <taxon>Pseudomonadati</taxon>
        <taxon>Pseudomonadota</taxon>
        <taxon>Alphaproteobacteria</taxon>
        <taxon>Hyphomicrobiales</taxon>
        <taxon>Rhizobiaceae</taxon>
        <taxon>Rhizobium/Agrobacterium group</taxon>
        <taxon>Agrobacterium</taxon>
        <taxon>Agrobacterium tumefaciens complex</taxon>
    </lineage>
</organism>